<accession>Q9LVT8</accession>
<accession>A8MQD7</accession>
<accession>A8MRX4</accession>
<accession>Q8LDQ7</accession>
<sequence length="357" mass="37999">MASLNPFDLLGDDAEDPSQLAVALSQKVEKAAAAVQPPKAAKFPTKPAPPSQAVRESRNAPQGGRGGTGGRGGFSRGRGNGGYNRDNRNNDAPGNENGFSGGYRRPSEDADGASRGGSVGGYRVGGGREGPRRGGVANGESGDVERPPRNYDRHSRTGHGTGMKRNGGGRGNWGTTEDDIPPTSEEPTTEVEKSPVAEKQGGEDETPEAKKELTAEEKAQKEAEEAEAREMTLEEYEKILEEKKKALQATKVEERKVDTKVFESMQQLSNKKNTDEEIFIKLGSDKEKRKDATEKAKKSLSINEFLKPADGKRYNGRGGGSRGRGGRGGRGEGGNQRYAKEAAAPAIGDTAQFPSLG</sequence>
<dbReference type="EMBL" id="AB018117">
    <property type="protein sequence ID" value="BAA97154.1"/>
    <property type="molecule type" value="Genomic_DNA"/>
</dbReference>
<dbReference type="EMBL" id="CP002688">
    <property type="protein sequence ID" value="AED95484.1"/>
    <property type="molecule type" value="Genomic_DNA"/>
</dbReference>
<dbReference type="EMBL" id="CP002688">
    <property type="protein sequence ID" value="AED95485.1"/>
    <property type="molecule type" value="Genomic_DNA"/>
</dbReference>
<dbReference type="EMBL" id="CP002688">
    <property type="protein sequence ID" value="AED95486.1"/>
    <property type="molecule type" value="Genomic_DNA"/>
</dbReference>
<dbReference type="EMBL" id="AY140040">
    <property type="protein sequence ID" value="AAM98181.1"/>
    <property type="molecule type" value="mRNA"/>
</dbReference>
<dbReference type="EMBL" id="BT010371">
    <property type="protein sequence ID" value="AAQ56814.1"/>
    <property type="molecule type" value="mRNA"/>
</dbReference>
<dbReference type="EMBL" id="AK316963">
    <property type="protein sequence ID" value="BAH19662.1"/>
    <property type="molecule type" value="mRNA"/>
</dbReference>
<dbReference type="EMBL" id="AK226441">
    <property type="protein sequence ID" value="BAE98584.1"/>
    <property type="molecule type" value="mRNA"/>
</dbReference>
<dbReference type="EMBL" id="AY085859">
    <property type="protein sequence ID" value="AAM63072.1"/>
    <property type="molecule type" value="mRNA"/>
</dbReference>
<dbReference type="RefSeq" id="NP_001078723.1">
    <molecule id="Q9LVT8-2"/>
    <property type="nucleotide sequence ID" value="NM_001085254.1"/>
</dbReference>
<dbReference type="RefSeq" id="NP_001078724.1">
    <molecule id="Q9LVT8-3"/>
    <property type="nucleotide sequence ID" value="NM_001085255.1"/>
</dbReference>
<dbReference type="RefSeq" id="NP_199532.1">
    <molecule id="Q9LVT8-1"/>
    <property type="nucleotide sequence ID" value="NM_124092.4"/>
</dbReference>
<dbReference type="FunCoup" id="Q9LVT8">
    <property type="interactions" value="721"/>
</dbReference>
<dbReference type="STRING" id="3702.Q9LVT8"/>
<dbReference type="iPTMnet" id="Q9LVT8"/>
<dbReference type="MetOSite" id="Q9LVT8"/>
<dbReference type="PaxDb" id="3702-AT5G47210.1"/>
<dbReference type="ProteomicsDB" id="236908">
    <molecule id="Q9LVT8-1"/>
</dbReference>
<dbReference type="EnsemblPlants" id="AT5G47210.1">
    <molecule id="Q9LVT8-1"/>
    <property type="protein sequence ID" value="AT5G47210.1"/>
    <property type="gene ID" value="AT5G47210"/>
</dbReference>
<dbReference type="EnsemblPlants" id="AT5G47210.2">
    <molecule id="Q9LVT8-2"/>
    <property type="protein sequence ID" value="AT5G47210.2"/>
    <property type="gene ID" value="AT5G47210"/>
</dbReference>
<dbReference type="EnsemblPlants" id="AT5G47210.3">
    <molecule id="Q9LVT8-3"/>
    <property type="protein sequence ID" value="AT5G47210.3"/>
    <property type="gene ID" value="AT5G47210"/>
</dbReference>
<dbReference type="GeneID" id="834767"/>
<dbReference type="Gramene" id="AT5G47210.1">
    <molecule id="Q9LVT8-1"/>
    <property type="protein sequence ID" value="AT5G47210.1"/>
    <property type="gene ID" value="AT5G47210"/>
</dbReference>
<dbReference type="Gramene" id="AT5G47210.2">
    <molecule id="Q9LVT8-2"/>
    <property type="protein sequence ID" value="AT5G47210.2"/>
    <property type="gene ID" value="AT5G47210"/>
</dbReference>
<dbReference type="Gramene" id="AT5G47210.3">
    <molecule id="Q9LVT8-3"/>
    <property type="protein sequence ID" value="AT5G47210.3"/>
    <property type="gene ID" value="AT5G47210"/>
</dbReference>
<dbReference type="KEGG" id="ath:AT5G47210"/>
<dbReference type="Araport" id="AT5G47210"/>
<dbReference type="TAIR" id="AT5G47210"/>
<dbReference type="eggNOG" id="KOG2945">
    <property type="taxonomic scope" value="Eukaryota"/>
</dbReference>
<dbReference type="HOGENOM" id="CLU_033492_0_0_1"/>
<dbReference type="InParanoid" id="Q9LVT8"/>
<dbReference type="OMA" id="FRNNDAP"/>
<dbReference type="OrthoDB" id="784393at2759"/>
<dbReference type="PhylomeDB" id="Q9LVT8"/>
<dbReference type="CD-CODE" id="4299E36E">
    <property type="entry name" value="Nucleolus"/>
</dbReference>
<dbReference type="PRO" id="PR:Q9LVT8"/>
<dbReference type="Proteomes" id="UP000006548">
    <property type="component" value="Chromosome 5"/>
</dbReference>
<dbReference type="ExpressionAtlas" id="Q9LVT8">
    <property type="expression patterns" value="baseline and differential"/>
</dbReference>
<dbReference type="GO" id="GO:0005634">
    <property type="term" value="C:nucleus"/>
    <property type="evidence" value="ECO:0000250"/>
    <property type="project" value="UniProtKB"/>
</dbReference>
<dbReference type="GO" id="GO:0048471">
    <property type="term" value="C:perinuclear region of cytoplasm"/>
    <property type="evidence" value="ECO:0007669"/>
    <property type="project" value="UniProtKB-SubCell"/>
</dbReference>
<dbReference type="GO" id="GO:0005886">
    <property type="term" value="C:plasma membrane"/>
    <property type="evidence" value="ECO:0007005"/>
    <property type="project" value="TAIR"/>
</dbReference>
<dbReference type="GO" id="GO:0009536">
    <property type="term" value="C:plastid"/>
    <property type="evidence" value="ECO:0007005"/>
    <property type="project" value="TAIR"/>
</dbReference>
<dbReference type="GO" id="GO:0003729">
    <property type="term" value="F:mRNA binding"/>
    <property type="evidence" value="ECO:0000314"/>
    <property type="project" value="TAIR"/>
</dbReference>
<dbReference type="GO" id="GO:0006417">
    <property type="term" value="P:regulation of translation"/>
    <property type="evidence" value="ECO:0007669"/>
    <property type="project" value="UniProtKB-KW"/>
</dbReference>
<dbReference type="InterPro" id="IPR039764">
    <property type="entry name" value="HABP4/SERBP1-like"/>
</dbReference>
<dbReference type="InterPro" id="IPR006861">
    <property type="entry name" value="HABP4_PAIRBP1-bd"/>
</dbReference>
<dbReference type="InterPro" id="IPR019084">
    <property type="entry name" value="STM1-like_N"/>
</dbReference>
<dbReference type="PANTHER" id="PTHR12299">
    <property type="entry name" value="HYALURONIC ACID-BINDING PROTEIN 4"/>
    <property type="match status" value="1"/>
</dbReference>
<dbReference type="PANTHER" id="PTHR12299:SF78">
    <property type="entry name" value="RGG REPEATS NUCLEAR RNA BINDING PROTEIN C"/>
    <property type="match status" value="1"/>
</dbReference>
<dbReference type="Pfam" id="PF04774">
    <property type="entry name" value="HABP4_PAI-RBP1"/>
    <property type="match status" value="1"/>
</dbReference>
<dbReference type="Pfam" id="PF09598">
    <property type="entry name" value="Stm1_N"/>
    <property type="match status" value="1"/>
</dbReference>
<dbReference type="SMART" id="SM01233">
    <property type="entry name" value="HABP4_PAI-RBP1"/>
    <property type="match status" value="1"/>
</dbReference>
<feature type="initiator methionine" description="Removed" evidence="9">
    <location>
        <position position="1"/>
    </location>
</feature>
<feature type="chain" id="PRO_0000438318" description="RGG repeats nuclear RNA binding protein C">
    <location>
        <begin position="2"/>
        <end position="357"/>
    </location>
</feature>
<feature type="domain" description="FF" evidence="4">
    <location>
        <begin position="239"/>
        <end position="299"/>
    </location>
</feature>
<feature type="region of interest" description="Disordered" evidence="5">
    <location>
        <begin position="25"/>
        <end position="232"/>
    </location>
</feature>
<feature type="region of interest" description="Disordered" evidence="5">
    <location>
        <begin position="308"/>
        <end position="357"/>
    </location>
</feature>
<feature type="compositionally biased region" description="Low complexity" evidence="5">
    <location>
        <begin position="31"/>
        <end position="45"/>
    </location>
</feature>
<feature type="compositionally biased region" description="Gly residues" evidence="5">
    <location>
        <begin position="63"/>
        <end position="82"/>
    </location>
</feature>
<feature type="compositionally biased region" description="Gly residues" evidence="5">
    <location>
        <begin position="114"/>
        <end position="128"/>
    </location>
</feature>
<feature type="compositionally biased region" description="Basic and acidic residues" evidence="5">
    <location>
        <begin position="143"/>
        <end position="155"/>
    </location>
</feature>
<feature type="compositionally biased region" description="Gly residues" evidence="5">
    <location>
        <begin position="159"/>
        <end position="172"/>
    </location>
</feature>
<feature type="compositionally biased region" description="Basic and acidic residues" evidence="5">
    <location>
        <begin position="190"/>
        <end position="232"/>
    </location>
</feature>
<feature type="compositionally biased region" description="Gly residues" evidence="5">
    <location>
        <begin position="316"/>
        <end position="334"/>
    </location>
</feature>
<feature type="modified residue" description="N-acetylalanine" evidence="9">
    <location>
        <position position="2"/>
    </location>
</feature>
<feature type="modified residue" description="Phosphoserine" evidence="1">
    <location>
        <position position="355"/>
    </location>
</feature>
<feature type="splice variant" id="VSP_058645" description="In isoform 2.">
    <original>LQATKVEERKVDTKVFESMQQLSNKKNTDEEIFIKLGSDKEKRKDATEKAKKSLSINEF</original>
    <variation>PAEEEVAVVVVKEETKGMQKKLQLRRLETQLSSLRWASKDPWSFSLAISVFRFSLVEFC</variation>
    <location>
        <begin position="247"/>
        <end position="305"/>
    </location>
</feature>
<feature type="splice variant" id="VSP_058646" description="In isoform 3.">
    <original>SLS</original>
    <variation>VLH</variation>
    <location>
        <begin position="299"/>
        <end position="301"/>
    </location>
</feature>
<feature type="splice variant" id="VSP_058647" description="In isoform 3.">
    <location>
        <begin position="302"/>
        <end position="357"/>
    </location>
</feature>
<feature type="splice variant" id="VSP_058648" description="In isoform 2.">
    <location>
        <begin position="306"/>
        <end position="357"/>
    </location>
</feature>
<feature type="sequence conflict" description="In Ref. 6; AAM63072." evidence="6" ref="6">
    <original>R</original>
    <variation>L</variation>
    <location>
        <position position="128"/>
    </location>
</feature>
<name>RGGC_ARATH</name>
<gene>
    <name evidence="6" type="primary">RGGC</name>
    <name evidence="7" type="ordered locus">At5g47210</name>
    <name evidence="8" type="ORF">MQL5.6</name>
</gene>
<proteinExistence type="evidence at protein level"/>
<protein>
    <recommendedName>
        <fullName evidence="6">RGG repeats nuclear RNA binding protein C</fullName>
    </recommendedName>
</protein>
<organism>
    <name type="scientific">Arabidopsis thaliana</name>
    <name type="common">Mouse-ear cress</name>
    <dbReference type="NCBI Taxonomy" id="3702"/>
    <lineage>
        <taxon>Eukaryota</taxon>
        <taxon>Viridiplantae</taxon>
        <taxon>Streptophyta</taxon>
        <taxon>Embryophyta</taxon>
        <taxon>Tracheophyta</taxon>
        <taxon>Spermatophyta</taxon>
        <taxon>Magnoliopsida</taxon>
        <taxon>eudicotyledons</taxon>
        <taxon>Gunneridae</taxon>
        <taxon>Pentapetalae</taxon>
        <taxon>rosids</taxon>
        <taxon>malvids</taxon>
        <taxon>Brassicales</taxon>
        <taxon>Brassicaceae</taxon>
        <taxon>Camelineae</taxon>
        <taxon>Arabidopsis</taxon>
    </lineage>
</organism>
<keyword id="KW-0007">Acetylation</keyword>
<keyword id="KW-0025">Alternative splicing</keyword>
<keyword id="KW-0963">Cytoplasm</keyword>
<keyword id="KW-0539">Nucleus</keyword>
<keyword id="KW-0597">Phosphoprotein</keyword>
<keyword id="KW-1185">Reference proteome</keyword>
<keyword id="KW-0694">RNA-binding</keyword>
<keyword id="KW-0810">Translation regulation</keyword>
<comment type="function">
    <text evidence="2 3">Ribosome-binding protein that acts as a regulator of mRNA translation by promoting ribosome inactivation (By similarity). Binds RNA (By similarity).</text>
</comment>
<comment type="subcellular location">
    <subcellularLocation>
        <location evidence="3">Nucleus</location>
    </subcellularLocation>
    <subcellularLocation>
        <location evidence="1">Cytoplasm</location>
        <location evidence="1">Perinuclear region</location>
    </subcellularLocation>
</comment>
<comment type="alternative products">
    <event type="alternative splicing"/>
    <isoform>
        <id>Q9LVT8-1</id>
        <name>1</name>
        <sequence type="displayed"/>
    </isoform>
    <isoform>
        <id>Q9LVT8-2</id>
        <name>2</name>
        <sequence type="described" ref="VSP_058645 VSP_058648"/>
    </isoform>
    <isoform>
        <id>Q9LVT8-3</id>
        <name>3</name>
        <sequence type="described" ref="VSP_058646 VSP_058647"/>
    </isoform>
</comment>
<comment type="similarity">
    <text evidence="6">Belongs to the SERBP1-HABP4 family.</text>
</comment>
<evidence type="ECO:0000250" key="1">
    <source>
        <dbReference type="UniProtKB" id="O23523"/>
    </source>
</evidence>
<evidence type="ECO:0000250" key="2">
    <source>
        <dbReference type="UniProtKB" id="Q5XJA5"/>
    </source>
</evidence>
<evidence type="ECO:0000250" key="3">
    <source>
        <dbReference type="UniProtKB" id="Q9SQ56"/>
    </source>
</evidence>
<evidence type="ECO:0000255" key="4">
    <source>
        <dbReference type="PROSITE-ProRule" id="PRU01013"/>
    </source>
</evidence>
<evidence type="ECO:0000256" key="5">
    <source>
        <dbReference type="SAM" id="MobiDB-lite"/>
    </source>
</evidence>
<evidence type="ECO:0000305" key="6"/>
<evidence type="ECO:0000312" key="7">
    <source>
        <dbReference type="Araport" id="AT5G47210"/>
    </source>
</evidence>
<evidence type="ECO:0000312" key="8">
    <source>
        <dbReference type="EMBL" id="BAA97154.1"/>
    </source>
</evidence>
<evidence type="ECO:0007744" key="9">
    <source>
    </source>
</evidence>
<reference key="1">
    <citation type="journal article" date="2000" name="DNA Res.">
        <title>Structural analysis of Arabidopsis thaliana chromosome 5. X. Sequence features of the regions of 3,076,755 bp covered by sixty P1 and TAC clones.</title>
        <authorList>
            <person name="Sato S."/>
            <person name="Nakamura Y."/>
            <person name="Kaneko T."/>
            <person name="Katoh T."/>
            <person name="Asamizu E."/>
            <person name="Kotani H."/>
            <person name="Tabata S."/>
        </authorList>
    </citation>
    <scope>NUCLEOTIDE SEQUENCE [LARGE SCALE GENOMIC DNA]</scope>
    <source>
        <strain>cv. Columbia</strain>
    </source>
</reference>
<reference key="2">
    <citation type="journal article" date="2017" name="Plant J.">
        <title>Araport11: a complete reannotation of the Arabidopsis thaliana reference genome.</title>
        <authorList>
            <person name="Cheng C.Y."/>
            <person name="Krishnakumar V."/>
            <person name="Chan A.P."/>
            <person name="Thibaud-Nissen F."/>
            <person name="Schobel S."/>
            <person name="Town C.D."/>
        </authorList>
    </citation>
    <scope>GENOME REANNOTATION</scope>
    <source>
        <strain>cv. Columbia</strain>
    </source>
</reference>
<reference key="3">
    <citation type="journal article" date="2003" name="Science">
        <title>Empirical analysis of transcriptional activity in the Arabidopsis genome.</title>
        <authorList>
            <person name="Yamada K."/>
            <person name="Lim J."/>
            <person name="Dale J.M."/>
            <person name="Chen H."/>
            <person name="Shinn P."/>
            <person name="Palm C.J."/>
            <person name="Southwick A.M."/>
            <person name="Wu H.C."/>
            <person name="Kim C.J."/>
            <person name="Nguyen M."/>
            <person name="Pham P.K."/>
            <person name="Cheuk R.F."/>
            <person name="Karlin-Newmann G."/>
            <person name="Liu S.X."/>
            <person name="Lam B."/>
            <person name="Sakano H."/>
            <person name="Wu T."/>
            <person name="Yu G."/>
            <person name="Miranda M."/>
            <person name="Quach H.L."/>
            <person name="Tripp M."/>
            <person name="Chang C.H."/>
            <person name="Lee J.M."/>
            <person name="Toriumi M.J."/>
            <person name="Chan M.M."/>
            <person name="Tang C.C."/>
            <person name="Onodera C.S."/>
            <person name="Deng J.M."/>
            <person name="Akiyama K."/>
            <person name="Ansari Y."/>
            <person name="Arakawa T."/>
            <person name="Banh J."/>
            <person name="Banno F."/>
            <person name="Bowser L."/>
            <person name="Brooks S.Y."/>
            <person name="Carninci P."/>
            <person name="Chao Q."/>
            <person name="Choy N."/>
            <person name="Enju A."/>
            <person name="Goldsmith A.D."/>
            <person name="Gurjal M."/>
            <person name="Hansen N.F."/>
            <person name="Hayashizaki Y."/>
            <person name="Johnson-Hopson C."/>
            <person name="Hsuan V.W."/>
            <person name="Iida K."/>
            <person name="Karnes M."/>
            <person name="Khan S."/>
            <person name="Koesema E."/>
            <person name="Ishida J."/>
            <person name="Jiang P.X."/>
            <person name="Jones T."/>
            <person name="Kawai J."/>
            <person name="Kamiya A."/>
            <person name="Meyers C."/>
            <person name="Nakajima M."/>
            <person name="Narusaka M."/>
            <person name="Seki M."/>
            <person name="Sakurai T."/>
            <person name="Satou M."/>
            <person name="Tamse R."/>
            <person name="Vaysberg M."/>
            <person name="Wallender E.K."/>
            <person name="Wong C."/>
            <person name="Yamamura Y."/>
            <person name="Yuan S."/>
            <person name="Shinozaki K."/>
            <person name="Davis R.W."/>
            <person name="Theologis A."/>
            <person name="Ecker J.R."/>
        </authorList>
    </citation>
    <scope>NUCLEOTIDE SEQUENCE [LARGE SCALE MRNA] (ISOFORM 1)</scope>
    <source>
        <strain>cv. Columbia</strain>
    </source>
</reference>
<reference key="4">
    <citation type="journal article" date="2009" name="DNA Res.">
        <title>Analysis of multiple occurrences of alternative splicing events in Arabidopsis thaliana using novel sequenced full-length cDNAs.</title>
        <authorList>
            <person name="Iida K."/>
            <person name="Fukami-Kobayashi K."/>
            <person name="Toyoda A."/>
            <person name="Sakaki Y."/>
            <person name="Kobayashi M."/>
            <person name="Seki M."/>
            <person name="Shinozaki K."/>
        </authorList>
    </citation>
    <scope>NUCLEOTIDE SEQUENCE [LARGE SCALE MRNA] (ISOFORM 2)</scope>
    <source>
        <strain>cv. Columbia</strain>
        <tissue>Root</tissue>
    </source>
</reference>
<reference key="5">
    <citation type="submission" date="2006-07" db="EMBL/GenBank/DDBJ databases">
        <title>Large-scale analysis of RIKEN Arabidopsis full-length (RAFL) cDNAs.</title>
        <authorList>
            <person name="Totoki Y."/>
            <person name="Seki M."/>
            <person name="Ishida J."/>
            <person name="Nakajima M."/>
            <person name="Enju A."/>
            <person name="Kamiya A."/>
            <person name="Narusaka M."/>
            <person name="Shin-i T."/>
            <person name="Nakagawa M."/>
            <person name="Sakamoto N."/>
            <person name="Oishi K."/>
            <person name="Kohara Y."/>
            <person name="Kobayashi M."/>
            <person name="Toyoda A."/>
            <person name="Sakaki Y."/>
            <person name="Sakurai T."/>
            <person name="Iida K."/>
            <person name="Akiyama K."/>
            <person name="Satou M."/>
            <person name="Toyoda T."/>
            <person name="Konagaya A."/>
            <person name="Carninci P."/>
            <person name="Kawai J."/>
            <person name="Hayashizaki Y."/>
            <person name="Shinozaki K."/>
        </authorList>
    </citation>
    <scope>NUCLEOTIDE SEQUENCE [LARGE SCALE MRNA] (ISOFORM 1)</scope>
    <source>
        <strain>cv. Columbia</strain>
    </source>
</reference>
<reference key="6">
    <citation type="submission" date="2002-03" db="EMBL/GenBank/DDBJ databases">
        <title>Full-length cDNA from Arabidopsis thaliana.</title>
        <authorList>
            <person name="Brover V.V."/>
            <person name="Troukhan M.E."/>
            <person name="Alexandrov N.A."/>
            <person name="Lu Y.-P."/>
            <person name="Flavell R.B."/>
            <person name="Feldmann K.A."/>
        </authorList>
    </citation>
    <scope>NUCLEOTIDE SEQUENCE [LARGE SCALE MRNA] (ISOFORM 1)</scope>
</reference>
<reference key="7">
    <citation type="journal article" date="2009" name="Plant Physiol.">
        <title>Large-scale Arabidopsis phosphoproteome profiling reveals novel chloroplast kinase substrates and phosphorylation networks.</title>
        <authorList>
            <person name="Reiland S."/>
            <person name="Messerli G."/>
            <person name="Baerenfaller K."/>
            <person name="Gerrits B."/>
            <person name="Endler A."/>
            <person name="Grossmann J."/>
            <person name="Gruissem W."/>
            <person name="Baginsky S."/>
        </authorList>
    </citation>
    <scope>IDENTIFICATION BY MASS SPECTROMETRY [LARGE SCALE ANALYSIS]</scope>
</reference>
<reference key="8">
    <citation type="journal article" date="2012" name="Mol. Cell. Proteomics">
        <title>Comparative large-scale characterisation of plant vs. mammal proteins reveals similar and idiosyncratic N-alpha acetylation features.</title>
        <authorList>
            <person name="Bienvenut W.V."/>
            <person name="Sumpton D."/>
            <person name="Martinez A."/>
            <person name="Lilla S."/>
            <person name="Espagne C."/>
            <person name="Meinnel T."/>
            <person name="Giglione C."/>
        </authorList>
    </citation>
    <scope>ACETYLATION [LARGE SCALE ANALYSIS] AT ALA-2</scope>
    <scope>CLEAVAGE OF INITIATOR METHIONINE [LARGE SCALE ANALYSIS]</scope>
    <scope>IDENTIFICATION BY MASS SPECTROMETRY [LARGE SCALE ANALYSIS]</scope>
</reference>